<evidence type="ECO:0000255" key="1">
    <source>
        <dbReference type="HAMAP-Rule" id="MF_00372"/>
    </source>
</evidence>
<protein>
    <recommendedName>
        <fullName evidence="1">Imidazolonepropionase</fullName>
        <ecNumber evidence="1">3.5.2.7</ecNumber>
    </recommendedName>
    <alternativeName>
        <fullName evidence="1">Imidazolone-5-propionate hydrolase</fullName>
    </alternativeName>
</protein>
<accession>Q487V5</accession>
<reference key="1">
    <citation type="journal article" date="2005" name="Proc. Natl. Acad. Sci. U.S.A.">
        <title>The psychrophilic lifestyle as revealed by the genome sequence of Colwellia psychrerythraea 34H through genomic and proteomic analyses.</title>
        <authorList>
            <person name="Methe B.A."/>
            <person name="Nelson K.E."/>
            <person name="Deming J.W."/>
            <person name="Momen B."/>
            <person name="Melamud E."/>
            <person name="Zhang X."/>
            <person name="Moult J."/>
            <person name="Madupu R."/>
            <person name="Nelson W.C."/>
            <person name="Dodson R.J."/>
            <person name="Brinkac L.M."/>
            <person name="Daugherty S.C."/>
            <person name="Durkin A.S."/>
            <person name="DeBoy R.T."/>
            <person name="Kolonay J.F."/>
            <person name="Sullivan S.A."/>
            <person name="Zhou L."/>
            <person name="Davidsen T.M."/>
            <person name="Wu M."/>
            <person name="Huston A.L."/>
            <person name="Lewis M."/>
            <person name="Weaver B."/>
            <person name="Weidman J.F."/>
            <person name="Khouri H."/>
            <person name="Utterback T.R."/>
            <person name="Feldblyum T.V."/>
            <person name="Fraser C.M."/>
        </authorList>
    </citation>
    <scope>NUCLEOTIDE SEQUENCE [LARGE SCALE GENOMIC DNA]</scope>
    <source>
        <strain>34H / ATCC BAA-681</strain>
    </source>
</reference>
<comment type="function">
    <text evidence="1">Catalyzes the hydrolytic cleavage of the carbon-nitrogen bond in imidazolone-5-propanoate to yield N-formimidoyl-L-glutamate. It is the third step in the universal histidine degradation pathway.</text>
</comment>
<comment type="catalytic activity">
    <reaction evidence="1">
        <text>4-imidazolone-5-propanoate + H2O = N-formimidoyl-L-glutamate</text>
        <dbReference type="Rhea" id="RHEA:23660"/>
        <dbReference type="ChEBI" id="CHEBI:15377"/>
        <dbReference type="ChEBI" id="CHEBI:58928"/>
        <dbReference type="ChEBI" id="CHEBI:77893"/>
        <dbReference type="EC" id="3.5.2.7"/>
    </reaction>
</comment>
<comment type="cofactor">
    <cofactor evidence="1">
        <name>Zn(2+)</name>
        <dbReference type="ChEBI" id="CHEBI:29105"/>
    </cofactor>
    <cofactor evidence="1">
        <name>Fe(3+)</name>
        <dbReference type="ChEBI" id="CHEBI:29034"/>
    </cofactor>
    <text evidence="1">Binds 1 zinc or iron ion per subunit.</text>
</comment>
<comment type="pathway">
    <text evidence="1">Amino-acid degradation; L-histidine degradation into L-glutamate; N-formimidoyl-L-glutamate from L-histidine: step 3/3.</text>
</comment>
<comment type="subcellular location">
    <subcellularLocation>
        <location evidence="1">Cytoplasm</location>
    </subcellularLocation>
</comment>
<comment type="similarity">
    <text evidence="1">Belongs to the metallo-dependent hydrolases superfamily. HutI family.</text>
</comment>
<gene>
    <name evidence="1" type="primary">hutI</name>
    <name type="ordered locus">CPS_0911</name>
</gene>
<proteinExistence type="inferred from homology"/>
<feature type="chain" id="PRO_0000306458" description="Imidazolonepropionase">
    <location>
        <begin position="1"/>
        <end position="418"/>
    </location>
</feature>
<feature type="binding site" evidence="1">
    <location>
        <position position="79"/>
    </location>
    <ligand>
        <name>Fe(3+)</name>
        <dbReference type="ChEBI" id="CHEBI:29034"/>
    </ligand>
</feature>
<feature type="binding site" evidence="1">
    <location>
        <position position="79"/>
    </location>
    <ligand>
        <name>Zn(2+)</name>
        <dbReference type="ChEBI" id="CHEBI:29105"/>
    </ligand>
</feature>
<feature type="binding site" evidence="1">
    <location>
        <position position="81"/>
    </location>
    <ligand>
        <name>Fe(3+)</name>
        <dbReference type="ChEBI" id="CHEBI:29034"/>
    </ligand>
</feature>
<feature type="binding site" evidence="1">
    <location>
        <position position="81"/>
    </location>
    <ligand>
        <name>Zn(2+)</name>
        <dbReference type="ChEBI" id="CHEBI:29105"/>
    </ligand>
</feature>
<feature type="binding site" evidence="1">
    <location>
        <position position="88"/>
    </location>
    <ligand>
        <name>4-imidazolone-5-propanoate</name>
        <dbReference type="ChEBI" id="CHEBI:77893"/>
    </ligand>
</feature>
<feature type="binding site" evidence="1">
    <location>
        <position position="151"/>
    </location>
    <ligand>
        <name>4-imidazolone-5-propanoate</name>
        <dbReference type="ChEBI" id="CHEBI:77893"/>
    </ligand>
</feature>
<feature type="binding site" evidence="1">
    <location>
        <position position="151"/>
    </location>
    <ligand>
        <name>N-formimidoyl-L-glutamate</name>
        <dbReference type="ChEBI" id="CHEBI:58928"/>
    </ligand>
</feature>
<feature type="binding site" evidence="1">
    <location>
        <position position="184"/>
    </location>
    <ligand>
        <name>4-imidazolone-5-propanoate</name>
        <dbReference type="ChEBI" id="CHEBI:77893"/>
    </ligand>
</feature>
<feature type="binding site" evidence="1">
    <location>
        <position position="249"/>
    </location>
    <ligand>
        <name>Fe(3+)</name>
        <dbReference type="ChEBI" id="CHEBI:29034"/>
    </ligand>
</feature>
<feature type="binding site" evidence="1">
    <location>
        <position position="249"/>
    </location>
    <ligand>
        <name>Zn(2+)</name>
        <dbReference type="ChEBI" id="CHEBI:29105"/>
    </ligand>
</feature>
<feature type="binding site" evidence="1">
    <location>
        <position position="252"/>
    </location>
    <ligand>
        <name>4-imidazolone-5-propanoate</name>
        <dbReference type="ChEBI" id="CHEBI:77893"/>
    </ligand>
</feature>
<feature type="binding site" evidence="1">
    <location>
        <position position="324"/>
    </location>
    <ligand>
        <name>Fe(3+)</name>
        <dbReference type="ChEBI" id="CHEBI:29034"/>
    </ligand>
</feature>
<feature type="binding site" evidence="1">
    <location>
        <position position="324"/>
    </location>
    <ligand>
        <name>Zn(2+)</name>
        <dbReference type="ChEBI" id="CHEBI:29105"/>
    </ligand>
</feature>
<feature type="binding site" evidence="1">
    <location>
        <position position="326"/>
    </location>
    <ligand>
        <name>N-formimidoyl-L-glutamate</name>
        <dbReference type="ChEBI" id="CHEBI:58928"/>
    </ligand>
</feature>
<feature type="binding site" evidence="1">
    <location>
        <position position="328"/>
    </location>
    <ligand>
        <name>N-formimidoyl-L-glutamate</name>
        <dbReference type="ChEBI" id="CHEBI:58928"/>
    </ligand>
</feature>
<feature type="binding site" evidence="1">
    <location>
        <position position="329"/>
    </location>
    <ligand>
        <name>4-imidazolone-5-propanoate</name>
        <dbReference type="ChEBI" id="CHEBI:77893"/>
    </ligand>
</feature>
<dbReference type="EC" id="3.5.2.7" evidence="1"/>
<dbReference type="EMBL" id="CP000083">
    <property type="protein sequence ID" value="AAZ25600.1"/>
    <property type="molecule type" value="Genomic_DNA"/>
</dbReference>
<dbReference type="RefSeq" id="WP_011041754.1">
    <property type="nucleotide sequence ID" value="NC_003910.7"/>
</dbReference>
<dbReference type="SMR" id="Q487V5"/>
<dbReference type="STRING" id="167879.CPS_0911"/>
<dbReference type="KEGG" id="cps:CPS_0911"/>
<dbReference type="HOGENOM" id="CLU_041647_0_0_6"/>
<dbReference type="UniPathway" id="UPA00379">
    <property type="reaction ID" value="UER00551"/>
</dbReference>
<dbReference type="Proteomes" id="UP000000547">
    <property type="component" value="Chromosome"/>
</dbReference>
<dbReference type="GO" id="GO:0005737">
    <property type="term" value="C:cytoplasm"/>
    <property type="evidence" value="ECO:0007669"/>
    <property type="project" value="UniProtKB-SubCell"/>
</dbReference>
<dbReference type="GO" id="GO:0050480">
    <property type="term" value="F:imidazolonepropionase activity"/>
    <property type="evidence" value="ECO:0007669"/>
    <property type="project" value="UniProtKB-UniRule"/>
</dbReference>
<dbReference type="GO" id="GO:0005506">
    <property type="term" value="F:iron ion binding"/>
    <property type="evidence" value="ECO:0007669"/>
    <property type="project" value="UniProtKB-UniRule"/>
</dbReference>
<dbReference type="GO" id="GO:0008270">
    <property type="term" value="F:zinc ion binding"/>
    <property type="evidence" value="ECO:0007669"/>
    <property type="project" value="UniProtKB-UniRule"/>
</dbReference>
<dbReference type="GO" id="GO:0019556">
    <property type="term" value="P:L-histidine catabolic process to glutamate and formamide"/>
    <property type="evidence" value="ECO:0007669"/>
    <property type="project" value="UniProtKB-UniPathway"/>
</dbReference>
<dbReference type="GO" id="GO:0019557">
    <property type="term" value="P:L-histidine catabolic process to glutamate and formate"/>
    <property type="evidence" value="ECO:0007669"/>
    <property type="project" value="UniProtKB-UniPathway"/>
</dbReference>
<dbReference type="CDD" id="cd01296">
    <property type="entry name" value="Imidazolone-5PH"/>
    <property type="match status" value="1"/>
</dbReference>
<dbReference type="FunFam" id="3.20.20.140:FF:000007">
    <property type="entry name" value="Imidazolonepropionase"/>
    <property type="match status" value="1"/>
</dbReference>
<dbReference type="Gene3D" id="3.20.20.140">
    <property type="entry name" value="Metal-dependent hydrolases"/>
    <property type="match status" value="1"/>
</dbReference>
<dbReference type="Gene3D" id="2.30.40.10">
    <property type="entry name" value="Urease, subunit C, domain 1"/>
    <property type="match status" value="1"/>
</dbReference>
<dbReference type="HAMAP" id="MF_00372">
    <property type="entry name" value="HutI"/>
    <property type="match status" value="1"/>
</dbReference>
<dbReference type="InterPro" id="IPR006680">
    <property type="entry name" value="Amidohydro-rel"/>
</dbReference>
<dbReference type="InterPro" id="IPR005920">
    <property type="entry name" value="HutI"/>
</dbReference>
<dbReference type="InterPro" id="IPR011059">
    <property type="entry name" value="Metal-dep_hydrolase_composite"/>
</dbReference>
<dbReference type="InterPro" id="IPR032466">
    <property type="entry name" value="Metal_Hydrolase"/>
</dbReference>
<dbReference type="NCBIfam" id="TIGR01224">
    <property type="entry name" value="hutI"/>
    <property type="match status" value="1"/>
</dbReference>
<dbReference type="PANTHER" id="PTHR42752">
    <property type="entry name" value="IMIDAZOLONEPROPIONASE"/>
    <property type="match status" value="1"/>
</dbReference>
<dbReference type="PANTHER" id="PTHR42752:SF1">
    <property type="entry name" value="IMIDAZOLONEPROPIONASE-RELATED"/>
    <property type="match status" value="1"/>
</dbReference>
<dbReference type="Pfam" id="PF01979">
    <property type="entry name" value="Amidohydro_1"/>
    <property type="match status" value="1"/>
</dbReference>
<dbReference type="SUPFAM" id="SSF51338">
    <property type="entry name" value="Composite domain of metallo-dependent hydrolases"/>
    <property type="match status" value="1"/>
</dbReference>
<dbReference type="SUPFAM" id="SSF51556">
    <property type="entry name" value="Metallo-dependent hydrolases"/>
    <property type="match status" value="1"/>
</dbReference>
<organism>
    <name type="scientific">Colwellia psychrerythraea (strain 34H / ATCC BAA-681)</name>
    <name type="common">Vibrio psychroerythus</name>
    <dbReference type="NCBI Taxonomy" id="167879"/>
    <lineage>
        <taxon>Bacteria</taxon>
        <taxon>Pseudomonadati</taxon>
        <taxon>Pseudomonadota</taxon>
        <taxon>Gammaproteobacteria</taxon>
        <taxon>Alteromonadales</taxon>
        <taxon>Colwelliaceae</taxon>
        <taxon>Colwellia</taxon>
    </lineage>
</organism>
<sequence>MTLFKHWQTLYINVNLATMTDGSESYGEISQGALAISAGKIAWLGKESDLPEHFSVTDEDIEVIDCKGQWLTPGLIDCHTHLVYGGNRANEFEMRLQGKSYQEIANAGGGIVSTVTATRRASEQELLASALPRLTALHQQGVTTVEIKSGYGLDTINEIKMLKVAGLLADELPVTIKRTFLGAHALPIEYKDNAEGYLDVVCEEMLPQVVSENLADAVDVFCEGIGFSLAQTKRVFDAAQSHDLPIKVHAEQLSNLGASELAANYNALSSDHIEFLDEAGIKAMKKSGMTAVLLPGAFYFLRETQLPPIELLRKHQVPMAVATDANPGTSPIHNIHLMLNMACTLFRLTPSEALAGITCYGAKALGLSESKGQLAVGYDADIALWNINQPAELCYQFGVNPLSRLIQNGQQVLMNESA</sequence>
<name>HUTI_COLP3</name>
<keyword id="KW-0963">Cytoplasm</keyword>
<keyword id="KW-0369">Histidine metabolism</keyword>
<keyword id="KW-0378">Hydrolase</keyword>
<keyword id="KW-0408">Iron</keyword>
<keyword id="KW-0479">Metal-binding</keyword>
<keyword id="KW-0862">Zinc</keyword>